<evidence type="ECO:0000255" key="1">
    <source>
        <dbReference type="HAMAP-Rule" id="MF_00185"/>
    </source>
</evidence>
<reference key="1">
    <citation type="submission" date="2008-07" db="EMBL/GenBank/DDBJ databases">
        <title>Complete sequence of Geobacter bemidjiensis BEM.</title>
        <authorList>
            <consortium name="US DOE Joint Genome Institute"/>
            <person name="Lucas S."/>
            <person name="Copeland A."/>
            <person name="Lapidus A."/>
            <person name="Glavina del Rio T."/>
            <person name="Dalin E."/>
            <person name="Tice H."/>
            <person name="Bruce D."/>
            <person name="Goodwin L."/>
            <person name="Pitluck S."/>
            <person name="Kiss H."/>
            <person name="Brettin T."/>
            <person name="Detter J.C."/>
            <person name="Han C."/>
            <person name="Kuske C.R."/>
            <person name="Schmutz J."/>
            <person name="Larimer F."/>
            <person name="Land M."/>
            <person name="Hauser L."/>
            <person name="Kyrpides N."/>
            <person name="Lykidis A."/>
            <person name="Lovley D."/>
            <person name="Richardson P."/>
        </authorList>
    </citation>
    <scope>NUCLEOTIDE SEQUENCE [LARGE SCALE GENOMIC DNA]</scope>
    <source>
        <strain>ATCC BAA-1014 / DSM 16622 / JCM 12645 / Bem</strain>
    </source>
</reference>
<feature type="chain" id="PRO_0000377167" description="tRNA dimethylallyltransferase 1">
    <location>
        <begin position="1"/>
        <end position="306"/>
    </location>
</feature>
<feature type="region of interest" description="Interaction with substrate tRNA" evidence="1">
    <location>
        <begin position="40"/>
        <end position="43"/>
    </location>
</feature>
<feature type="binding site" evidence="1">
    <location>
        <begin position="15"/>
        <end position="22"/>
    </location>
    <ligand>
        <name>ATP</name>
        <dbReference type="ChEBI" id="CHEBI:30616"/>
    </ligand>
</feature>
<feature type="binding site" evidence="1">
    <location>
        <begin position="17"/>
        <end position="22"/>
    </location>
    <ligand>
        <name>substrate</name>
    </ligand>
</feature>
<feature type="site" description="Interaction with substrate tRNA" evidence="1">
    <location>
        <position position="106"/>
    </location>
</feature>
<keyword id="KW-0067">ATP-binding</keyword>
<keyword id="KW-0460">Magnesium</keyword>
<keyword id="KW-0547">Nucleotide-binding</keyword>
<keyword id="KW-1185">Reference proteome</keyword>
<keyword id="KW-0808">Transferase</keyword>
<keyword id="KW-0819">tRNA processing</keyword>
<protein>
    <recommendedName>
        <fullName evidence="1">tRNA dimethylallyltransferase 1</fullName>
        <ecNumber evidence="1">2.5.1.75</ecNumber>
    </recommendedName>
    <alternativeName>
        <fullName evidence="1">Dimethylallyl diphosphate:tRNA dimethylallyltransferase 1</fullName>
        <shortName evidence="1">DMAPP:tRNA dimethylallyltransferase 1</shortName>
        <shortName evidence="1">DMATase 1</shortName>
    </alternativeName>
    <alternativeName>
        <fullName evidence="1">Isopentenyl-diphosphate:tRNA isopentenyltransferase 1</fullName>
        <shortName evidence="1">IPP transferase 1</shortName>
        <shortName evidence="1">IPPT 1</shortName>
        <shortName evidence="1">IPTase 1</shortName>
    </alternativeName>
</protein>
<gene>
    <name evidence="1" type="primary">miaA1</name>
    <name type="ordered locus">Gbem_0979</name>
</gene>
<comment type="function">
    <text evidence="1">Catalyzes the transfer of a dimethylallyl group onto the adenine at position 37 in tRNAs that read codons beginning with uridine, leading to the formation of N6-(dimethylallyl)adenosine (i(6)A).</text>
</comment>
<comment type="catalytic activity">
    <reaction evidence="1">
        <text>adenosine(37) in tRNA + dimethylallyl diphosphate = N(6)-dimethylallyladenosine(37) in tRNA + diphosphate</text>
        <dbReference type="Rhea" id="RHEA:26482"/>
        <dbReference type="Rhea" id="RHEA-COMP:10162"/>
        <dbReference type="Rhea" id="RHEA-COMP:10375"/>
        <dbReference type="ChEBI" id="CHEBI:33019"/>
        <dbReference type="ChEBI" id="CHEBI:57623"/>
        <dbReference type="ChEBI" id="CHEBI:74411"/>
        <dbReference type="ChEBI" id="CHEBI:74415"/>
        <dbReference type="EC" id="2.5.1.75"/>
    </reaction>
</comment>
<comment type="cofactor">
    <cofactor evidence="1">
        <name>Mg(2+)</name>
        <dbReference type="ChEBI" id="CHEBI:18420"/>
    </cofactor>
</comment>
<comment type="subunit">
    <text evidence="1">Monomer.</text>
</comment>
<comment type="similarity">
    <text evidence="1">Belongs to the IPP transferase family.</text>
</comment>
<proteinExistence type="inferred from homology"/>
<dbReference type="EC" id="2.5.1.75" evidence="1"/>
<dbReference type="EMBL" id="CP001124">
    <property type="protein sequence ID" value="ACH38000.1"/>
    <property type="molecule type" value="Genomic_DNA"/>
</dbReference>
<dbReference type="RefSeq" id="WP_012529413.1">
    <property type="nucleotide sequence ID" value="NC_011146.1"/>
</dbReference>
<dbReference type="SMR" id="B5EGD5"/>
<dbReference type="STRING" id="404380.Gbem_0979"/>
<dbReference type="KEGG" id="gbm:Gbem_0979"/>
<dbReference type="eggNOG" id="COG0324">
    <property type="taxonomic scope" value="Bacteria"/>
</dbReference>
<dbReference type="HOGENOM" id="CLU_032616_0_1_7"/>
<dbReference type="OrthoDB" id="9776390at2"/>
<dbReference type="Proteomes" id="UP000008825">
    <property type="component" value="Chromosome"/>
</dbReference>
<dbReference type="GO" id="GO:0005524">
    <property type="term" value="F:ATP binding"/>
    <property type="evidence" value="ECO:0007669"/>
    <property type="project" value="UniProtKB-UniRule"/>
</dbReference>
<dbReference type="GO" id="GO:0052381">
    <property type="term" value="F:tRNA dimethylallyltransferase activity"/>
    <property type="evidence" value="ECO:0007669"/>
    <property type="project" value="UniProtKB-UniRule"/>
</dbReference>
<dbReference type="GO" id="GO:0006400">
    <property type="term" value="P:tRNA modification"/>
    <property type="evidence" value="ECO:0007669"/>
    <property type="project" value="TreeGrafter"/>
</dbReference>
<dbReference type="Gene3D" id="1.10.20.140">
    <property type="match status" value="1"/>
</dbReference>
<dbReference type="Gene3D" id="3.40.50.300">
    <property type="entry name" value="P-loop containing nucleotide triphosphate hydrolases"/>
    <property type="match status" value="1"/>
</dbReference>
<dbReference type="HAMAP" id="MF_00185">
    <property type="entry name" value="IPP_trans"/>
    <property type="match status" value="1"/>
</dbReference>
<dbReference type="InterPro" id="IPR039657">
    <property type="entry name" value="Dimethylallyltransferase"/>
</dbReference>
<dbReference type="InterPro" id="IPR018022">
    <property type="entry name" value="IPT"/>
</dbReference>
<dbReference type="InterPro" id="IPR027417">
    <property type="entry name" value="P-loop_NTPase"/>
</dbReference>
<dbReference type="NCBIfam" id="TIGR00174">
    <property type="entry name" value="miaA"/>
    <property type="match status" value="1"/>
</dbReference>
<dbReference type="PANTHER" id="PTHR11088">
    <property type="entry name" value="TRNA DIMETHYLALLYLTRANSFERASE"/>
    <property type="match status" value="1"/>
</dbReference>
<dbReference type="PANTHER" id="PTHR11088:SF60">
    <property type="entry name" value="TRNA DIMETHYLALLYLTRANSFERASE"/>
    <property type="match status" value="1"/>
</dbReference>
<dbReference type="Pfam" id="PF01715">
    <property type="entry name" value="IPPT"/>
    <property type="match status" value="1"/>
</dbReference>
<dbReference type="SUPFAM" id="SSF52540">
    <property type="entry name" value="P-loop containing nucleoside triphosphate hydrolases"/>
    <property type="match status" value="1"/>
</dbReference>
<accession>B5EGD5</accession>
<name>MIAA1_CITBB</name>
<organism>
    <name type="scientific">Citrifermentans bemidjiense (strain ATCC BAA-1014 / DSM 16622 / JCM 12645 / Bem)</name>
    <name type="common">Geobacter bemidjiensis</name>
    <dbReference type="NCBI Taxonomy" id="404380"/>
    <lineage>
        <taxon>Bacteria</taxon>
        <taxon>Pseudomonadati</taxon>
        <taxon>Thermodesulfobacteriota</taxon>
        <taxon>Desulfuromonadia</taxon>
        <taxon>Geobacterales</taxon>
        <taxon>Geobacteraceae</taxon>
        <taxon>Citrifermentans</taxon>
    </lineage>
</organism>
<sequence>MQDKEKKIKVIVLGGPTGSGKSDLAVKLAEEIGGEIVNADSMQVYRRLDIGTAKPSAADLARVPHHLIDILDPNEDFTASDFRREATAAIADIERRGKRAIVVGGTGLYIRALLYGLVDSPTGDPELRRQFDDVPGEELLRRLSLVDPETAARLHPNDRVRLIRALEVYTQTGRPVSAFRSEHAFSDVHYQVLKMAIRVERQELYRRIDLRVEKMLEDGLVEEVRLLLAAGYGHELKALRSIGYKEITAYLAGEMTLDEAVTLIKRDTRRYAKRQMTWFGKENDIYWLEYPGSFATILGHVIEFLA</sequence>